<reference key="1">
    <citation type="submission" date="2006-02" db="EMBL/GenBank/DDBJ databases">
        <title>Complete sequence of chromosome of Rhodoferax ferrireducens DSM 15236.</title>
        <authorList>
            <person name="Copeland A."/>
            <person name="Lucas S."/>
            <person name="Lapidus A."/>
            <person name="Barry K."/>
            <person name="Detter J.C."/>
            <person name="Glavina del Rio T."/>
            <person name="Hammon N."/>
            <person name="Israni S."/>
            <person name="Pitluck S."/>
            <person name="Brettin T."/>
            <person name="Bruce D."/>
            <person name="Han C."/>
            <person name="Tapia R."/>
            <person name="Gilna P."/>
            <person name="Kiss H."/>
            <person name="Schmutz J."/>
            <person name="Larimer F."/>
            <person name="Land M."/>
            <person name="Kyrpides N."/>
            <person name="Ivanova N."/>
            <person name="Richardson P."/>
        </authorList>
    </citation>
    <scope>NUCLEOTIDE SEQUENCE [LARGE SCALE GENOMIC DNA]</scope>
    <source>
        <strain>ATCC BAA-621 / DSM 15236 / T118</strain>
    </source>
</reference>
<comment type="function">
    <text evidence="1">Binds 16S rRNA, required for the assembly of 30S particles and may also be responsible for determining the conformation of the 16S rRNA at the A site.</text>
</comment>
<comment type="subunit">
    <text evidence="1">Part of the 30S ribosomal subunit. Contacts proteins S3 and S10.</text>
</comment>
<comment type="similarity">
    <text evidence="1">Belongs to the universal ribosomal protein uS14 family.</text>
</comment>
<comment type="sequence caution" evidence="2">
    <conflict type="erroneous initiation">
        <sequence resource="EMBL-CDS" id="ABD71917"/>
    </conflict>
</comment>
<protein>
    <recommendedName>
        <fullName evidence="1">Small ribosomal subunit protein uS14</fullName>
    </recommendedName>
    <alternativeName>
        <fullName evidence="2">30S ribosomal protein S14</fullName>
    </alternativeName>
</protein>
<evidence type="ECO:0000255" key="1">
    <source>
        <dbReference type="HAMAP-Rule" id="MF_00537"/>
    </source>
</evidence>
<evidence type="ECO:0000305" key="2"/>
<gene>
    <name evidence="1" type="primary">rpsN</name>
    <name type="ordered locus">Rfer_4230</name>
</gene>
<keyword id="KW-1185">Reference proteome</keyword>
<keyword id="KW-0687">Ribonucleoprotein</keyword>
<keyword id="KW-0689">Ribosomal protein</keyword>
<keyword id="KW-0694">RNA-binding</keyword>
<keyword id="KW-0699">rRNA-binding</keyword>
<dbReference type="EMBL" id="CP000267">
    <property type="protein sequence ID" value="ABD71917.1"/>
    <property type="status" value="ALT_INIT"/>
    <property type="molecule type" value="Genomic_DNA"/>
</dbReference>
<dbReference type="RefSeq" id="WP_041791105.1">
    <property type="nucleotide sequence ID" value="NC_007908.1"/>
</dbReference>
<dbReference type="SMR" id="Q21QN6"/>
<dbReference type="STRING" id="338969.Rfer_4230"/>
<dbReference type="KEGG" id="rfr:Rfer_4230"/>
<dbReference type="eggNOG" id="COG0199">
    <property type="taxonomic scope" value="Bacteria"/>
</dbReference>
<dbReference type="HOGENOM" id="CLU_139869_0_1_4"/>
<dbReference type="OrthoDB" id="9810484at2"/>
<dbReference type="Proteomes" id="UP000008332">
    <property type="component" value="Chromosome"/>
</dbReference>
<dbReference type="GO" id="GO:0005737">
    <property type="term" value="C:cytoplasm"/>
    <property type="evidence" value="ECO:0007669"/>
    <property type="project" value="UniProtKB-ARBA"/>
</dbReference>
<dbReference type="GO" id="GO:0015935">
    <property type="term" value="C:small ribosomal subunit"/>
    <property type="evidence" value="ECO:0007669"/>
    <property type="project" value="TreeGrafter"/>
</dbReference>
<dbReference type="GO" id="GO:0019843">
    <property type="term" value="F:rRNA binding"/>
    <property type="evidence" value="ECO:0007669"/>
    <property type="project" value="UniProtKB-UniRule"/>
</dbReference>
<dbReference type="GO" id="GO:0003735">
    <property type="term" value="F:structural constituent of ribosome"/>
    <property type="evidence" value="ECO:0007669"/>
    <property type="project" value="InterPro"/>
</dbReference>
<dbReference type="GO" id="GO:0006412">
    <property type="term" value="P:translation"/>
    <property type="evidence" value="ECO:0007669"/>
    <property type="project" value="UniProtKB-UniRule"/>
</dbReference>
<dbReference type="FunFam" id="1.10.287.1480:FF:000001">
    <property type="entry name" value="30S ribosomal protein S14"/>
    <property type="match status" value="1"/>
</dbReference>
<dbReference type="Gene3D" id="1.10.287.1480">
    <property type="match status" value="1"/>
</dbReference>
<dbReference type="HAMAP" id="MF_00537">
    <property type="entry name" value="Ribosomal_uS14_1"/>
    <property type="match status" value="1"/>
</dbReference>
<dbReference type="InterPro" id="IPR001209">
    <property type="entry name" value="Ribosomal_uS14"/>
</dbReference>
<dbReference type="InterPro" id="IPR023036">
    <property type="entry name" value="Ribosomal_uS14_bac/plastid"/>
</dbReference>
<dbReference type="NCBIfam" id="NF006477">
    <property type="entry name" value="PRK08881.1"/>
    <property type="match status" value="1"/>
</dbReference>
<dbReference type="PANTHER" id="PTHR19836">
    <property type="entry name" value="30S RIBOSOMAL PROTEIN S14"/>
    <property type="match status" value="1"/>
</dbReference>
<dbReference type="PANTHER" id="PTHR19836:SF19">
    <property type="entry name" value="SMALL RIBOSOMAL SUBUNIT PROTEIN US14M"/>
    <property type="match status" value="1"/>
</dbReference>
<dbReference type="Pfam" id="PF00253">
    <property type="entry name" value="Ribosomal_S14"/>
    <property type="match status" value="1"/>
</dbReference>
<dbReference type="SUPFAM" id="SSF57716">
    <property type="entry name" value="Glucocorticoid receptor-like (DNA-binding domain)"/>
    <property type="match status" value="1"/>
</dbReference>
<proteinExistence type="inferred from homology"/>
<feature type="chain" id="PRO_0000354391" description="Small ribosomal subunit protein uS14">
    <location>
        <begin position="1"/>
        <end position="101"/>
    </location>
</feature>
<name>RS14_ALBFT</name>
<organism>
    <name type="scientific">Albidiferax ferrireducens (strain ATCC BAA-621 / DSM 15236 / T118)</name>
    <name type="common">Rhodoferax ferrireducens</name>
    <dbReference type="NCBI Taxonomy" id="338969"/>
    <lineage>
        <taxon>Bacteria</taxon>
        <taxon>Pseudomonadati</taxon>
        <taxon>Pseudomonadota</taxon>
        <taxon>Betaproteobacteria</taxon>
        <taxon>Burkholderiales</taxon>
        <taxon>Comamonadaceae</taxon>
        <taxon>Rhodoferax</taxon>
    </lineage>
</organism>
<sequence length="101" mass="11370">MAKMALIQRELKRDNLVAKYAKKHAEFKAIAGDVKRSDEERAAARLGLQKLPRNANPTRQRNRCAITGRPRGTFQHFGLARAKIREMAFAGEIPGIVKASW</sequence>
<accession>Q21QN6</accession>